<feature type="chain" id="PRO_1000049099" description="Large ribosomal subunit protein bL20">
    <location>
        <begin position="1"/>
        <end position="119"/>
    </location>
</feature>
<organism>
    <name type="scientific">Verminephrobacter eiseniae (strain EF01-2)</name>
    <dbReference type="NCBI Taxonomy" id="391735"/>
    <lineage>
        <taxon>Bacteria</taxon>
        <taxon>Pseudomonadati</taxon>
        <taxon>Pseudomonadota</taxon>
        <taxon>Betaproteobacteria</taxon>
        <taxon>Burkholderiales</taxon>
        <taxon>Comamonadaceae</taxon>
        <taxon>Verminephrobacter</taxon>
    </lineage>
</organism>
<sequence>MPRVKRGVTARARHKKVLALAKGFRGRRGNVFRIAKQAVMKAGQYAYRDRRTKKRVFRQLWIARINAAARELGLTYSQFANGLKKAAIEIDRKMLADLAVHDKAAFGSIVEQVKARLAV</sequence>
<comment type="function">
    <text evidence="1">Binds directly to 23S ribosomal RNA and is necessary for the in vitro assembly process of the 50S ribosomal subunit. It is not involved in the protein synthesizing functions of that subunit.</text>
</comment>
<comment type="similarity">
    <text evidence="1">Belongs to the bacterial ribosomal protein bL20 family.</text>
</comment>
<accession>A1WMG8</accession>
<reference key="1">
    <citation type="submission" date="2006-12" db="EMBL/GenBank/DDBJ databases">
        <title>Complete sequence of chromosome 1 of Verminephrobacter eiseniae EF01-2.</title>
        <authorList>
            <person name="Copeland A."/>
            <person name="Lucas S."/>
            <person name="Lapidus A."/>
            <person name="Barry K."/>
            <person name="Detter J.C."/>
            <person name="Glavina del Rio T."/>
            <person name="Dalin E."/>
            <person name="Tice H."/>
            <person name="Pitluck S."/>
            <person name="Chertkov O."/>
            <person name="Brettin T."/>
            <person name="Bruce D."/>
            <person name="Han C."/>
            <person name="Tapia R."/>
            <person name="Gilna P."/>
            <person name="Schmutz J."/>
            <person name="Larimer F."/>
            <person name="Land M."/>
            <person name="Hauser L."/>
            <person name="Kyrpides N."/>
            <person name="Kim E."/>
            <person name="Stahl D."/>
            <person name="Richardson P."/>
        </authorList>
    </citation>
    <scope>NUCLEOTIDE SEQUENCE [LARGE SCALE GENOMIC DNA]</scope>
    <source>
        <strain>EF01-2</strain>
    </source>
</reference>
<protein>
    <recommendedName>
        <fullName evidence="1">Large ribosomal subunit protein bL20</fullName>
    </recommendedName>
    <alternativeName>
        <fullName evidence="2">50S ribosomal protein L20</fullName>
    </alternativeName>
</protein>
<evidence type="ECO:0000255" key="1">
    <source>
        <dbReference type="HAMAP-Rule" id="MF_00382"/>
    </source>
</evidence>
<evidence type="ECO:0000305" key="2"/>
<proteinExistence type="inferred from homology"/>
<gene>
    <name evidence="1" type="primary">rplT</name>
    <name type="ordered locus">Veis_3092</name>
</gene>
<dbReference type="EMBL" id="CP000542">
    <property type="protein sequence ID" value="ABM58825.1"/>
    <property type="molecule type" value="Genomic_DNA"/>
</dbReference>
<dbReference type="RefSeq" id="WP_011810820.1">
    <property type="nucleotide sequence ID" value="NC_008786.1"/>
</dbReference>
<dbReference type="SMR" id="A1WMG8"/>
<dbReference type="STRING" id="391735.Veis_3092"/>
<dbReference type="GeneID" id="76461554"/>
<dbReference type="KEGG" id="vei:Veis_3092"/>
<dbReference type="eggNOG" id="COG0292">
    <property type="taxonomic scope" value="Bacteria"/>
</dbReference>
<dbReference type="HOGENOM" id="CLU_123265_0_1_4"/>
<dbReference type="OrthoDB" id="9808966at2"/>
<dbReference type="Proteomes" id="UP000000374">
    <property type="component" value="Chromosome"/>
</dbReference>
<dbReference type="GO" id="GO:1990904">
    <property type="term" value="C:ribonucleoprotein complex"/>
    <property type="evidence" value="ECO:0007669"/>
    <property type="project" value="UniProtKB-KW"/>
</dbReference>
<dbReference type="GO" id="GO:0005840">
    <property type="term" value="C:ribosome"/>
    <property type="evidence" value="ECO:0007669"/>
    <property type="project" value="UniProtKB-KW"/>
</dbReference>
<dbReference type="GO" id="GO:0019843">
    <property type="term" value="F:rRNA binding"/>
    <property type="evidence" value="ECO:0007669"/>
    <property type="project" value="UniProtKB-UniRule"/>
</dbReference>
<dbReference type="GO" id="GO:0003735">
    <property type="term" value="F:structural constituent of ribosome"/>
    <property type="evidence" value="ECO:0007669"/>
    <property type="project" value="InterPro"/>
</dbReference>
<dbReference type="GO" id="GO:0000027">
    <property type="term" value="P:ribosomal large subunit assembly"/>
    <property type="evidence" value="ECO:0007669"/>
    <property type="project" value="UniProtKB-UniRule"/>
</dbReference>
<dbReference type="GO" id="GO:0006412">
    <property type="term" value="P:translation"/>
    <property type="evidence" value="ECO:0007669"/>
    <property type="project" value="InterPro"/>
</dbReference>
<dbReference type="CDD" id="cd07026">
    <property type="entry name" value="Ribosomal_L20"/>
    <property type="match status" value="1"/>
</dbReference>
<dbReference type="FunFam" id="1.10.1900.20:FF:000001">
    <property type="entry name" value="50S ribosomal protein L20"/>
    <property type="match status" value="1"/>
</dbReference>
<dbReference type="Gene3D" id="6.10.160.10">
    <property type="match status" value="1"/>
</dbReference>
<dbReference type="Gene3D" id="1.10.1900.20">
    <property type="entry name" value="Ribosomal protein L20"/>
    <property type="match status" value="1"/>
</dbReference>
<dbReference type="HAMAP" id="MF_00382">
    <property type="entry name" value="Ribosomal_bL20"/>
    <property type="match status" value="1"/>
</dbReference>
<dbReference type="InterPro" id="IPR005813">
    <property type="entry name" value="Ribosomal_bL20"/>
</dbReference>
<dbReference type="InterPro" id="IPR049946">
    <property type="entry name" value="RIBOSOMAL_L20_CS"/>
</dbReference>
<dbReference type="InterPro" id="IPR035566">
    <property type="entry name" value="Ribosomal_protein_bL20_C"/>
</dbReference>
<dbReference type="NCBIfam" id="TIGR01032">
    <property type="entry name" value="rplT_bact"/>
    <property type="match status" value="1"/>
</dbReference>
<dbReference type="PANTHER" id="PTHR10986">
    <property type="entry name" value="39S RIBOSOMAL PROTEIN L20"/>
    <property type="match status" value="1"/>
</dbReference>
<dbReference type="Pfam" id="PF00453">
    <property type="entry name" value="Ribosomal_L20"/>
    <property type="match status" value="1"/>
</dbReference>
<dbReference type="PRINTS" id="PR00062">
    <property type="entry name" value="RIBOSOMALL20"/>
</dbReference>
<dbReference type="SUPFAM" id="SSF74731">
    <property type="entry name" value="Ribosomal protein L20"/>
    <property type="match status" value="1"/>
</dbReference>
<dbReference type="PROSITE" id="PS00937">
    <property type="entry name" value="RIBOSOMAL_L20"/>
    <property type="match status" value="1"/>
</dbReference>
<name>RL20_VEREI</name>
<keyword id="KW-1185">Reference proteome</keyword>
<keyword id="KW-0687">Ribonucleoprotein</keyword>
<keyword id="KW-0689">Ribosomal protein</keyword>
<keyword id="KW-0694">RNA-binding</keyword>
<keyword id="KW-0699">rRNA-binding</keyword>